<reference key="1">
    <citation type="journal article" date="2000" name="DNA Res.">
        <title>Complete structure of the chloroplast genome of a legume, Lotus japonicus.</title>
        <authorList>
            <person name="Kato T."/>
            <person name="Kaneko T."/>
            <person name="Sato S."/>
            <person name="Nakamura Y."/>
            <person name="Tabata S."/>
        </authorList>
    </citation>
    <scope>NUCLEOTIDE SEQUENCE [LARGE SCALE GENOMIC DNA]</scope>
    <source>
        <strain>cv. Miyakojima MG-20</strain>
    </source>
</reference>
<gene>
    <name evidence="1" type="primary">atpE</name>
</gene>
<geneLocation type="chloroplast"/>
<comment type="function">
    <text evidence="1">Produces ATP from ADP in the presence of a proton gradient across the membrane.</text>
</comment>
<comment type="subunit">
    <text evidence="1">F-type ATPases have 2 components, CF(1) - the catalytic core - and CF(0) - the membrane proton channel. CF(1) has five subunits: alpha(3), beta(3), gamma(1), delta(1), epsilon(1). CF(0) has three main subunits: a, b and c.</text>
</comment>
<comment type="subcellular location">
    <subcellularLocation>
        <location evidence="1">Plastid</location>
        <location evidence="1">Chloroplast thylakoid membrane</location>
        <topology evidence="1">Peripheral membrane protein</topology>
    </subcellularLocation>
</comment>
<comment type="similarity">
    <text evidence="1">Belongs to the ATPase epsilon chain family.</text>
</comment>
<accession>Q9BBT9</accession>
<dbReference type="EMBL" id="AP002983">
    <property type="protein sequence ID" value="BAB33180.1"/>
    <property type="molecule type" value="Genomic_DNA"/>
</dbReference>
<dbReference type="RefSeq" id="NP_084782.1">
    <property type="nucleotide sequence ID" value="NC_002694.1"/>
</dbReference>
<dbReference type="SMR" id="Q9BBT9"/>
<dbReference type="GeneID" id="802845"/>
<dbReference type="GO" id="GO:0009535">
    <property type="term" value="C:chloroplast thylakoid membrane"/>
    <property type="evidence" value="ECO:0007669"/>
    <property type="project" value="UniProtKB-SubCell"/>
</dbReference>
<dbReference type="GO" id="GO:0045259">
    <property type="term" value="C:proton-transporting ATP synthase complex"/>
    <property type="evidence" value="ECO:0007669"/>
    <property type="project" value="UniProtKB-KW"/>
</dbReference>
<dbReference type="GO" id="GO:0005524">
    <property type="term" value="F:ATP binding"/>
    <property type="evidence" value="ECO:0007669"/>
    <property type="project" value="UniProtKB-UniRule"/>
</dbReference>
<dbReference type="GO" id="GO:0046933">
    <property type="term" value="F:proton-transporting ATP synthase activity, rotational mechanism"/>
    <property type="evidence" value="ECO:0007669"/>
    <property type="project" value="UniProtKB-UniRule"/>
</dbReference>
<dbReference type="CDD" id="cd12152">
    <property type="entry name" value="F1-ATPase_delta"/>
    <property type="match status" value="1"/>
</dbReference>
<dbReference type="FunFam" id="2.60.15.10:FF:000002">
    <property type="entry name" value="ATP synthase epsilon chain, chloroplastic"/>
    <property type="match status" value="1"/>
</dbReference>
<dbReference type="Gene3D" id="6.10.140.480">
    <property type="match status" value="1"/>
</dbReference>
<dbReference type="Gene3D" id="2.60.15.10">
    <property type="entry name" value="F0F1 ATP synthase delta/epsilon subunit, N-terminal"/>
    <property type="match status" value="1"/>
</dbReference>
<dbReference type="HAMAP" id="MF_00530">
    <property type="entry name" value="ATP_synth_epsil_bac"/>
    <property type="match status" value="1"/>
</dbReference>
<dbReference type="InterPro" id="IPR001469">
    <property type="entry name" value="ATP_synth_F1_dsu/esu"/>
</dbReference>
<dbReference type="InterPro" id="IPR020546">
    <property type="entry name" value="ATP_synth_F1_dsu/esu_N"/>
</dbReference>
<dbReference type="InterPro" id="IPR020547">
    <property type="entry name" value="ATP_synth_F1_esu_C"/>
</dbReference>
<dbReference type="InterPro" id="IPR036771">
    <property type="entry name" value="ATPsynth_dsu/esu_N"/>
</dbReference>
<dbReference type="NCBIfam" id="TIGR01216">
    <property type="entry name" value="ATP_synt_epsi"/>
    <property type="match status" value="1"/>
</dbReference>
<dbReference type="PANTHER" id="PTHR13822">
    <property type="entry name" value="ATP SYNTHASE DELTA/EPSILON CHAIN"/>
    <property type="match status" value="1"/>
</dbReference>
<dbReference type="PANTHER" id="PTHR13822:SF10">
    <property type="entry name" value="ATP SYNTHASE EPSILON CHAIN, CHLOROPLASTIC"/>
    <property type="match status" value="1"/>
</dbReference>
<dbReference type="Pfam" id="PF00401">
    <property type="entry name" value="ATP-synt_DE"/>
    <property type="match status" value="1"/>
</dbReference>
<dbReference type="Pfam" id="PF02823">
    <property type="entry name" value="ATP-synt_DE_N"/>
    <property type="match status" value="1"/>
</dbReference>
<dbReference type="SUPFAM" id="SSF51344">
    <property type="entry name" value="Epsilon subunit of F1F0-ATP synthase N-terminal domain"/>
    <property type="match status" value="1"/>
</dbReference>
<keyword id="KW-0066">ATP synthesis</keyword>
<keyword id="KW-0139">CF(1)</keyword>
<keyword id="KW-0150">Chloroplast</keyword>
<keyword id="KW-0375">Hydrogen ion transport</keyword>
<keyword id="KW-0406">Ion transport</keyword>
<keyword id="KW-0472">Membrane</keyword>
<keyword id="KW-0934">Plastid</keyword>
<keyword id="KW-0793">Thylakoid</keyword>
<keyword id="KW-0813">Transport</keyword>
<evidence type="ECO:0000255" key="1">
    <source>
        <dbReference type="HAMAP-Rule" id="MF_00530"/>
    </source>
</evidence>
<sequence length="133" mass="14661">MTLNLCVLTPNRIVWDSDVKEIILSTNSGQVGILPNHAPLAMALDIGILRIRLNDQWLTMALMGGFARIGNNEITVLVNDAEKGSDIDPQEAQQTLEIAEANLKEAKGKRQTIEANLALRRARTRVESINMIS</sequence>
<organism>
    <name type="scientific">Lotus japonicus</name>
    <name type="common">Lotus corniculatus var. japonicus</name>
    <dbReference type="NCBI Taxonomy" id="34305"/>
    <lineage>
        <taxon>Eukaryota</taxon>
        <taxon>Viridiplantae</taxon>
        <taxon>Streptophyta</taxon>
        <taxon>Embryophyta</taxon>
        <taxon>Tracheophyta</taxon>
        <taxon>Spermatophyta</taxon>
        <taxon>Magnoliopsida</taxon>
        <taxon>eudicotyledons</taxon>
        <taxon>Gunneridae</taxon>
        <taxon>Pentapetalae</taxon>
        <taxon>rosids</taxon>
        <taxon>fabids</taxon>
        <taxon>Fabales</taxon>
        <taxon>Fabaceae</taxon>
        <taxon>Papilionoideae</taxon>
        <taxon>50 kb inversion clade</taxon>
        <taxon>NPAAA clade</taxon>
        <taxon>Hologalegina</taxon>
        <taxon>robinioid clade</taxon>
        <taxon>Loteae</taxon>
        <taxon>Lotus</taxon>
    </lineage>
</organism>
<name>ATPE_LOTJA</name>
<protein>
    <recommendedName>
        <fullName evidence="1">ATP synthase epsilon chain, chloroplastic</fullName>
    </recommendedName>
    <alternativeName>
        <fullName evidence="1">ATP synthase F1 sector epsilon subunit</fullName>
    </alternativeName>
    <alternativeName>
        <fullName evidence="1">F-ATPase epsilon subunit</fullName>
    </alternativeName>
</protein>
<feature type="chain" id="PRO_0000188271" description="ATP synthase epsilon chain, chloroplastic">
    <location>
        <begin position="1"/>
        <end position="133"/>
    </location>
</feature>
<proteinExistence type="inferred from homology"/>